<dbReference type="EC" id="2.7.2.2" evidence="1"/>
<dbReference type="EMBL" id="BA000022">
    <property type="protein sequence ID" value="BAA18853.1"/>
    <property type="molecule type" value="Genomic_DNA"/>
</dbReference>
<dbReference type="PIR" id="S76941">
    <property type="entry name" value="S76941"/>
</dbReference>
<dbReference type="SMR" id="P74733"/>
<dbReference type="STRING" id="1148.gene:10500625"/>
<dbReference type="PaxDb" id="1148-1653943"/>
<dbReference type="EnsemblBacteria" id="BAA18853">
    <property type="protein sequence ID" value="BAA18853"/>
    <property type="gene ID" value="BAA18853"/>
</dbReference>
<dbReference type="KEGG" id="syn:sll0573"/>
<dbReference type="eggNOG" id="COG0549">
    <property type="taxonomic scope" value="Bacteria"/>
</dbReference>
<dbReference type="InParanoid" id="P74733"/>
<dbReference type="PhylomeDB" id="P74733"/>
<dbReference type="Proteomes" id="UP000001425">
    <property type="component" value="Chromosome"/>
</dbReference>
<dbReference type="GO" id="GO:0005829">
    <property type="term" value="C:cytosol"/>
    <property type="evidence" value="ECO:0000318"/>
    <property type="project" value="GO_Central"/>
</dbReference>
<dbReference type="GO" id="GO:0005524">
    <property type="term" value="F:ATP binding"/>
    <property type="evidence" value="ECO:0007669"/>
    <property type="project" value="UniProtKB-KW"/>
</dbReference>
<dbReference type="GO" id="GO:0008804">
    <property type="term" value="F:carbamate kinase activity"/>
    <property type="evidence" value="ECO:0007669"/>
    <property type="project" value="UniProtKB-EC"/>
</dbReference>
<dbReference type="GO" id="GO:0004349">
    <property type="term" value="F:glutamate 5-kinase activity"/>
    <property type="evidence" value="ECO:0000318"/>
    <property type="project" value="GO_Central"/>
</dbReference>
<dbReference type="GO" id="GO:0006525">
    <property type="term" value="P:arginine metabolic process"/>
    <property type="evidence" value="ECO:0007669"/>
    <property type="project" value="InterPro"/>
</dbReference>
<dbReference type="GO" id="GO:0006561">
    <property type="term" value="P:proline biosynthetic process"/>
    <property type="evidence" value="ECO:0000318"/>
    <property type="project" value="GO_Central"/>
</dbReference>
<dbReference type="CDD" id="cd04235">
    <property type="entry name" value="AAK_CK"/>
    <property type="match status" value="1"/>
</dbReference>
<dbReference type="FunFam" id="3.40.1160.10:FF:000007">
    <property type="entry name" value="Carbamate kinase"/>
    <property type="match status" value="1"/>
</dbReference>
<dbReference type="Gene3D" id="3.40.1160.10">
    <property type="entry name" value="Acetylglutamate kinase-like"/>
    <property type="match status" value="1"/>
</dbReference>
<dbReference type="InterPro" id="IPR036393">
    <property type="entry name" value="AceGlu_kinase-like_sf"/>
</dbReference>
<dbReference type="InterPro" id="IPR001048">
    <property type="entry name" value="Asp/Glu/Uridylate_kinase"/>
</dbReference>
<dbReference type="InterPro" id="IPR003964">
    <property type="entry name" value="Carb_kinase"/>
</dbReference>
<dbReference type="NCBIfam" id="TIGR00746">
    <property type="entry name" value="arcC"/>
    <property type="match status" value="1"/>
</dbReference>
<dbReference type="NCBIfam" id="NF009008">
    <property type="entry name" value="PRK12354.1"/>
    <property type="match status" value="1"/>
</dbReference>
<dbReference type="PANTHER" id="PTHR30409">
    <property type="entry name" value="CARBAMATE KINASE"/>
    <property type="match status" value="1"/>
</dbReference>
<dbReference type="PANTHER" id="PTHR30409:SF1">
    <property type="entry name" value="CARBAMATE KINASE-RELATED"/>
    <property type="match status" value="1"/>
</dbReference>
<dbReference type="Pfam" id="PF00696">
    <property type="entry name" value="AA_kinase"/>
    <property type="match status" value="1"/>
</dbReference>
<dbReference type="PIRSF" id="PIRSF000723">
    <property type="entry name" value="Carbamate_kin"/>
    <property type="match status" value="1"/>
</dbReference>
<dbReference type="PRINTS" id="PR01469">
    <property type="entry name" value="CARBMTKINASE"/>
</dbReference>
<dbReference type="SUPFAM" id="SSF53633">
    <property type="entry name" value="Carbamate kinase-like"/>
    <property type="match status" value="1"/>
</dbReference>
<protein>
    <recommendedName>
        <fullName evidence="1">Carbamate kinase</fullName>
        <ecNumber evidence="1">2.7.2.2</ecNumber>
    </recommendedName>
</protein>
<sequence length="308" mass="32935">MNSPNQNTRPIVIALGGNALLQRGQPPEAEIQKANIHIAALAIAKIARHYPVVVTHGNGPQVGLLALQGECEKSCKPYPLDVLGAETEGMIGYLLEQELRNQLPGRDVVTLLTQIVVDRQDPAFLQPTKPIGPVYTLEQAQQLAQERGWAIAADGQGYRRVVASPEPKRIIELPTIQLLVKSGALVVCAGGGGIPVVVNEAGGLQGVEAVIDKDLAAALLAQNLQAQGLLLLTDVDGVYENWSTNYAHCFEQTTPKNLRRYRFAAGSMGPKVEAACRFVETTGQWCGIGKLDQALDIIDGKAGTVVMP</sequence>
<reference key="1">
    <citation type="journal article" date="1996" name="DNA Res.">
        <title>Sequence analysis of the genome of the unicellular cyanobacterium Synechocystis sp. strain PCC6803. II. Sequence determination of the entire genome and assignment of potential protein-coding regions.</title>
        <authorList>
            <person name="Kaneko T."/>
            <person name="Sato S."/>
            <person name="Kotani H."/>
            <person name="Tanaka A."/>
            <person name="Asamizu E."/>
            <person name="Nakamura Y."/>
            <person name="Miyajima N."/>
            <person name="Hirosawa M."/>
            <person name="Sugiura M."/>
            <person name="Sasamoto S."/>
            <person name="Kimura T."/>
            <person name="Hosouchi T."/>
            <person name="Matsuno A."/>
            <person name="Muraki A."/>
            <person name="Nakazaki N."/>
            <person name="Naruo K."/>
            <person name="Okumura S."/>
            <person name="Shimpo S."/>
            <person name="Takeuchi C."/>
            <person name="Wada T."/>
            <person name="Watanabe A."/>
            <person name="Yamada M."/>
            <person name="Yasuda M."/>
            <person name="Tabata S."/>
        </authorList>
    </citation>
    <scope>NUCLEOTIDE SEQUENCE [LARGE SCALE GENOMIC DNA]</scope>
    <source>
        <strain>ATCC 27184 / PCC 6803 / Kazusa</strain>
    </source>
</reference>
<accession>P74733</accession>
<organism>
    <name type="scientific">Synechocystis sp. (strain ATCC 27184 / PCC 6803 / Kazusa)</name>
    <dbReference type="NCBI Taxonomy" id="1111708"/>
    <lineage>
        <taxon>Bacteria</taxon>
        <taxon>Bacillati</taxon>
        <taxon>Cyanobacteriota</taxon>
        <taxon>Cyanophyceae</taxon>
        <taxon>Synechococcales</taxon>
        <taxon>Merismopediaceae</taxon>
        <taxon>Synechocystis</taxon>
    </lineage>
</organism>
<evidence type="ECO:0000250" key="1">
    <source>
        <dbReference type="UniProtKB" id="P13982"/>
    </source>
</evidence>
<evidence type="ECO:0000305" key="2"/>
<evidence type="ECO:0000312" key="3">
    <source>
        <dbReference type="EMBL" id="BAA18853.1"/>
    </source>
</evidence>
<name>ARCC_SYNY3</name>
<keyword id="KW-0067">ATP-binding</keyword>
<keyword id="KW-0963">Cytoplasm</keyword>
<keyword id="KW-0418">Kinase</keyword>
<keyword id="KW-0547">Nucleotide-binding</keyword>
<keyword id="KW-1185">Reference proteome</keyword>
<keyword id="KW-0808">Transferase</keyword>
<feature type="chain" id="PRO_0000185141" description="Carbamate kinase">
    <location>
        <begin position="1"/>
        <end position="308"/>
    </location>
</feature>
<proteinExistence type="inferred from homology"/>
<comment type="catalytic activity">
    <reaction evidence="1">
        <text>hydrogencarbonate + NH4(+) + ATP = carbamoyl phosphate + ADP + H2O + H(+)</text>
        <dbReference type="Rhea" id="RHEA:10152"/>
        <dbReference type="ChEBI" id="CHEBI:15377"/>
        <dbReference type="ChEBI" id="CHEBI:15378"/>
        <dbReference type="ChEBI" id="CHEBI:17544"/>
        <dbReference type="ChEBI" id="CHEBI:28938"/>
        <dbReference type="ChEBI" id="CHEBI:30616"/>
        <dbReference type="ChEBI" id="CHEBI:58228"/>
        <dbReference type="ChEBI" id="CHEBI:456216"/>
        <dbReference type="EC" id="2.7.2.2"/>
    </reaction>
</comment>
<comment type="subcellular location">
    <subcellularLocation>
        <location evidence="2">Cytoplasm</location>
    </subcellularLocation>
</comment>
<comment type="similarity">
    <text evidence="2">Belongs to the carbamate kinase family.</text>
</comment>
<gene>
    <name evidence="3" type="primary">arcC</name>
    <name evidence="3" type="ordered locus">sll0573</name>
</gene>